<feature type="chain" id="PRO_0000223499" description="Proteasome activator complex subunit 3" evidence="5">
    <location>
        <begin position="1"/>
        <end position="254"/>
    </location>
</feature>
<feature type="modified residue" description="N6-acetyllysine" evidence="1">
    <location>
        <position position="6"/>
    </location>
</feature>
<feature type="modified residue" description="N6-acetyllysine" evidence="1">
    <location>
        <position position="14"/>
    </location>
</feature>
<feature type="modified residue" description="N6-acetyllysine; by P300/CBP" evidence="1">
    <location>
        <position position="195"/>
    </location>
</feature>
<feature type="sequence conflict" description="In Ref. 1; CAG31370." evidence="5" ref="1">
    <original>D</original>
    <variation>A</variation>
    <location>
        <position position="117"/>
    </location>
</feature>
<evidence type="ECO:0000250" key="1"/>
<evidence type="ECO:0000250" key="2">
    <source>
        <dbReference type="UniProtKB" id="P61290"/>
    </source>
</evidence>
<evidence type="ECO:0000255" key="3"/>
<evidence type="ECO:0000269" key="4">
    <source>
    </source>
</evidence>
<evidence type="ECO:0000305" key="5"/>
<evidence type="ECO:0000312" key="6">
    <source>
        <dbReference type="EMBL" id="CAH65289.1"/>
    </source>
</evidence>
<accession>Q5F3J5</accession>
<accession>P84176</accession>
<accession>Q5ZLM3</accession>
<proteinExistence type="evidence at protein level"/>
<sequence>MASLLKVDPEVKLKVDSFRERITSEAEDLVANFFPKKLLELDGFLKEPILNIHDLTQIHSDMNLPVPDPILLTNSHDGLDGPNMKKRKLEDREETFQGTKVFVMPNGMLKSNQQLVDIIEKVKPEIRLLIEKCNTVKMWVQLLIPRIEDGNNFGVSIQEETVAELRTVESEAASYLDQISRYYITRAKLVSKIAKYPHVEDYRRTVTEIDEKEYISLRLIISELRNQYVTLHDMILKNIEKIKRPRSSNAETLY</sequence>
<keyword id="KW-0007">Acetylation</keyword>
<keyword id="KW-0647">Proteasome</keyword>
<keyword id="KW-1185">Reference proteome</keyword>
<comment type="function">
    <text evidence="2">Implicated in immunoproteasome assembly and required for efficient antigen processing. The PA28 activator complex enhances the generation of class I binding peptides by altering the cleavage pattern of the proteasome (By similarity).</text>
</comment>
<comment type="subunit">
    <text evidence="1">Homoheptamer.</text>
</comment>
<comment type="PTM">
    <text evidence="1">Acetylation at the major site Lys-195 is important for oligomerization and ability to degrade its target substrates. Deacetylated by SIRT1 (By similarity).</text>
</comment>
<comment type="mass spectrometry"/>
<comment type="similarity">
    <text evidence="3">Belongs to the PA28 family.</text>
</comment>
<protein>
    <recommendedName>
        <fullName>Proteasome activator complex subunit 3</fullName>
    </recommendedName>
    <alternativeName>
        <fullName>Activator of multicatalytic protease subunit 3</fullName>
    </alternativeName>
    <alternativeName>
        <fullName>Proteasome activator 28 subunit gamma</fullName>
        <shortName>PA28g</shortName>
        <shortName>PA28gamma</shortName>
    </alternativeName>
</protein>
<dbReference type="EMBL" id="AJ719711">
    <property type="protein sequence ID" value="CAG31370.1"/>
    <property type="molecule type" value="mRNA"/>
</dbReference>
<dbReference type="EMBL" id="AJ851655">
    <property type="protein sequence ID" value="CAH65289.1"/>
    <property type="molecule type" value="mRNA"/>
</dbReference>
<dbReference type="RefSeq" id="NP_001012568.1">
    <property type="nucleotide sequence ID" value="NM_001012550.2"/>
</dbReference>
<dbReference type="SMR" id="Q5F3J5"/>
<dbReference type="FunCoup" id="Q5F3J5">
    <property type="interactions" value="3093"/>
</dbReference>
<dbReference type="STRING" id="9031.ENSGALP00000062649"/>
<dbReference type="GlyGen" id="Q5F3J5">
    <property type="glycosylation" value="1 site"/>
</dbReference>
<dbReference type="PaxDb" id="9031-ENSGALP00000038984"/>
<dbReference type="GeneID" id="420017"/>
<dbReference type="KEGG" id="gga:420017"/>
<dbReference type="CTD" id="10197"/>
<dbReference type="VEuPathDB" id="HostDB:geneid_420017"/>
<dbReference type="eggNOG" id="KOG4470">
    <property type="taxonomic scope" value="Eukaryota"/>
</dbReference>
<dbReference type="HOGENOM" id="CLU_062515_1_0_1"/>
<dbReference type="InParanoid" id="Q5F3J5"/>
<dbReference type="OMA" id="PMFNERN"/>
<dbReference type="OrthoDB" id="6591885at2759"/>
<dbReference type="PhylomeDB" id="Q5F3J5"/>
<dbReference type="Reactome" id="R-GGA-9907900">
    <property type="pathway name" value="Proteasome assembly"/>
</dbReference>
<dbReference type="PRO" id="PR:Q5F3J5"/>
<dbReference type="Proteomes" id="UP000000539">
    <property type="component" value="Chromosome 27"/>
</dbReference>
<dbReference type="Bgee" id="ENSGALG00000002937">
    <property type="expression patterns" value="Expressed in spermatid and 13 other cell types or tissues"/>
</dbReference>
<dbReference type="GO" id="GO:0005737">
    <property type="term" value="C:cytoplasm"/>
    <property type="evidence" value="ECO:0000318"/>
    <property type="project" value="GO_Central"/>
</dbReference>
<dbReference type="GO" id="GO:0005654">
    <property type="term" value="C:nucleoplasm"/>
    <property type="evidence" value="ECO:0000318"/>
    <property type="project" value="GO_Central"/>
</dbReference>
<dbReference type="GO" id="GO:0008537">
    <property type="term" value="C:proteasome activator complex"/>
    <property type="evidence" value="ECO:0007669"/>
    <property type="project" value="InterPro"/>
</dbReference>
<dbReference type="GO" id="GO:0061133">
    <property type="term" value="F:endopeptidase activator activity"/>
    <property type="evidence" value="ECO:0000318"/>
    <property type="project" value="GO_Central"/>
</dbReference>
<dbReference type="GO" id="GO:2000045">
    <property type="term" value="P:regulation of G1/S transition of mitotic cell cycle"/>
    <property type="evidence" value="ECO:0000318"/>
    <property type="project" value="GO_Central"/>
</dbReference>
<dbReference type="GO" id="GO:0061136">
    <property type="term" value="P:regulation of proteasomal protein catabolic process"/>
    <property type="evidence" value="ECO:0000318"/>
    <property type="project" value="GO_Central"/>
</dbReference>
<dbReference type="FunFam" id="1.20.120.180:FF:000001">
    <property type="entry name" value="Proteasome activator complex subunit 3"/>
    <property type="match status" value="1"/>
</dbReference>
<dbReference type="FunFam" id="1.20.5.120:FF:000001">
    <property type="entry name" value="Proteasome activator complex subunit 3"/>
    <property type="match status" value="1"/>
</dbReference>
<dbReference type="Gene3D" id="1.20.120.180">
    <property type="entry name" value="Proteasome activator pa28, C-terminal domain"/>
    <property type="match status" value="1"/>
</dbReference>
<dbReference type="Gene3D" id="1.20.5.120">
    <property type="entry name" value="Proteasome activator pa28, N-terminal domain"/>
    <property type="match status" value="1"/>
</dbReference>
<dbReference type="InterPro" id="IPR003186">
    <property type="entry name" value="PA28_C"/>
</dbReference>
<dbReference type="InterPro" id="IPR036997">
    <property type="entry name" value="PA28_C_sf"/>
</dbReference>
<dbReference type="InterPro" id="IPR036996">
    <property type="entry name" value="PA28_N_sf"/>
</dbReference>
<dbReference type="InterPro" id="IPR009077">
    <property type="entry name" value="Proteasome_activ_PA28"/>
</dbReference>
<dbReference type="InterPro" id="IPR003185">
    <property type="entry name" value="Proteasome_activ_PA28_N"/>
</dbReference>
<dbReference type="InterPro" id="IPR036252">
    <property type="entry name" value="Proteasome_activ_sf"/>
</dbReference>
<dbReference type="PANTHER" id="PTHR10660:SF4">
    <property type="entry name" value="PROTEASOME ACTIVATOR COMPLEX SUBUNIT 3"/>
    <property type="match status" value="1"/>
</dbReference>
<dbReference type="PANTHER" id="PTHR10660">
    <property type="entry name" value="PROTEASOME REGULATOR PA28"/>
    <property type="match status" value="1"/>
</dbReference>
<dbReference type="Pfam" id="PF02252">
    <property type="entry name" value="PA28_C"/>
    <property type="match status" value="1"/>
</dbReference>
<dbReference type="Pfam" id="PF02251">
    <property type="entry name" value="PA28_N"/>
    <property type="match status" value="1"/>
</dbReference>
<dbReference type="SUPFAM" id="SSF47216">
    <property type="entry name" value="Proteasome activator"/>
    <property type="match status" value="1"/>
</dbReference>
<gene>
    <name evidence="2" type="primary">PSME3</name>
    <name type="ORF">RCJMB04_15e19</name>
    <name type="ORF">RCJMB04_5i13</name>
</gene>
<organism>
    <name type="scientific">Gallus gallus</name>
    <name type="common">Chicken</name>
    <dbReference type="NCBI Taxonomy" id="9031"/>
    <lineage>
        <taxon>Eukaryota</taxon>
        <taxon>Metazoa</taxon>
        <taxon>Chordata</taxon>
        <taxon>Craniata</taxon>
        <taxon>Vertebrata</taxon>
        <taxon>Euteleostomi</taxon>
        <taxon>Archelosauria</taxon>
        <taxon>Archosauria</taxon>
        <taxon>Dinosauria</taxon>
        <taxon>Saurischia</taxon>
        <taxon>Theropoda</taxon>
        <taxon>Coelurosauria</taxon>
        <taxon>Aves</taxon>
        <taxon>Neognathae</taxon>
        <taxon>Galloanserae</taxon>
        <taxon>Galliformes</taxon>
        <taxon>Phasianidae</taxon>
        <taxon>Phasianinae</taxon>
        <taxon>Gallus</taxon>
    </lineage>
</organism>
<reference evidence="5 6" key="1">
    <citation type="journal article" date="2005" name="Genome Biol.">
        <title>Full-length cDNAs from chicken bursal lymphocytes to facilitate gene function analysis.</title>
        <authorList>
            <person name="Caldwell R.B."/>
            <person name="Kierzek A.M."/>
            <person name="Arakawa H."/>
            <person name="Bezzubov Y."/>
            <person name="Zaim J."/>
            <person name="Fiedler P."/>
            <person name="Kutter S."/>
            <person name="Blagodatski A."/>
            <person name="Kostovska D."/>
            <person name="Koter M."/>
            <person name="Plachy J."/>
            <person name="Carninci P."/>
            <person name="Hayashizaki Y."/>
            <person name="Buerstedde J.-M."/>
        </authorList>
    </citation>
    <scope>NUCLEOTIDE SEQUENCE [LARGE SCALE MRNA]</scope>
    <source>
        <strain evidence="6">CB</strain>
        <tissue evidence="6">Bursa of Fabricius</tissue>
    </source>
</reference>
<reference evidence="5" key="2">
    <citation type="journal article" date="2005" name="Proteomics">
        <title>Proteomic analysis of the Gallus gallus embryo at stage-29 of development.</title>
        <authorList>
            <person name="Agudo D."/>
            <person name="Gomez-Esquer F."/>
            <person name="Diaz-Gil G."/>
            <person name="Martinez-Arribas F."/>
            <person name="Delcan J."/>
            <person name="Schneider J."/>
            <person name="Palomar M.A."/>
            <person name="Linares R."/>
        </authorList>
    </citation>
    <scope>IDENTIFICATION</scope>
    <scope>MASS SPECTROMETRY</scope>
    <source>
        <tissue evidence="4">Embryo</tissue>
    </source>
</reference>
<name>PSME3_CHICK</name>